<organism>
    <name type="scientific">Halobacterium salinarum (strain ATCC 700922 / JCM 11081 / NRC-1)</name>
    <name type="common">Halobacterium halobium</name>
    <dbReference type="NCBI Taxonomy" id="64091"/>
    <lineage>
        <taxon>Archaea</taxon>
        <taxon>Methanobacteriati</taxon>
        <taxon>Methanobacteriota</taxon>
        <taxon>Stenosarchaea group</taxon>
        <taxon>Halobacteria</taxon>
        <taxon>Halobacteriales</taxon>
        <taxon>Halobacteriaceae</taxon>
        <taxon>Halobacterium</taxon>
        <taxon>Halobacterium salinarum NRC-34001</taxon>
    </lineage>
</organism>
<protein>
    <recommendedName>
        <fullName evidence="1">Tryptophan--tRNA ligase 1</fullName>
        <ecNumber evidence="1">6.1.1.2</ecNumber>
    </recommendedName>
    <alternativeName>
        <fullName evidence="1">Tryptophanyl-tRNA synthetase 1</fullName>
        <shortName evidence="1">TrpRS 1</shortName>
    </alternativeName>
</protein>
<reference key="1">
    <citation type="journal article" date="2000" name="Proc. Natl. Acad. Sci. U.S.A.">
        <title>Genome sequence of Halobacterium species NRC-1.</title>
        <authorList>
            <person name="Ng W.V."/>
            <person name="Kennedy S.P."/>
            <person name="Mahairas G.G."/>
            <person name="Berquist B."/>
            <person name="Pan M."/>
            <person name="Shukla H.D."/>
            <person name="Lasky S.R."/>
            <person name="Baliga N.S."/>
            <person name="Thorsson V."/>
            <person name="Sbrogna J."/>
            <person name="Swartzell S."/>
            <person name="Weir D."/>
            <person name="Hall J."/>
            <person name="Dahl T.A."/>
            <person name="Welti R."/>
            <person name="Goo Y.A."/>
            <person name="Leithauser B."/>
            <person name="Keller K."/>
            <person name="Cruz R."/>
            <person name="Danson M.J."/>
            <person name="Hough D.W."/>
            <person name="Maddocks D.G."/>
            <person name="Jablonski P.E."/>
            <person name="Krebs M.P."/>
            <person name="Angevine C.M."/>
            <person name="Dale H."/>
            <person name="Isenbarger T.A."/>
            <person name="Peck R.F."/>
            <person name="Pohlschroder M."/>
            <person name="Spudich J.L."/>
            <person name="Jung K.-H."/>
            <person name="Alam M."/>
            <person name="Freitas T."/>
            <person name="Hou S."/>
            <person name="Daniels C.J."/>
            <person name="Dennis P.P."/>
            <person name="Omer A.D."/>
            <person name="Ebhardt H."/>
            <person name="Lowe T.M."/>
            <person name="Liang P."/>
            <person name="Riley M."/>
            <person name="Hood L."/>
            <person name="DasSarma S."/>
        </authorList>
    </citation>
    <scope>NUCLEOTIDE SEQUENCE [LARGE SCALE GENOMIC DNA]</scope>
    <source>
        <strain>ATCC 700922 / JCM 11081 / NRC-1</strain>
    </source>
</reference>
<proteinExistence type="inferred from homology"/>
<comment type="catalytic activity">
    <reaction evidence="1">
        <text>tRNA(Trp) + L-tryptophan + ATP = L-tryptophyl-tRNA(Trp) + AMP + diphosphate + H(+)</text>
        <dbReference type="Rhea" id="RHEA:24080"/>
        <dbReference type="Rhea" id="RHEA-COMP:9671"/>
        <dbReference type="Rhea" id="RHEA-COMP:9705"/>
        <dbReference type="ChEBI" id="CHEBI:15378"/>
        <dbReference type="ChEBI" id="CHEBI:30616"/>
        <dbReference type="ChEBI" id="CHEBI:33019"/>
        <dbReference type="ChEBI" id="CHEBI:57912"/>
        <dbReference type="ChEBI" id="CHEBI:78442"/>
        <dbReference type="ChEBI" id="CHEBI:78535"/>
        <dbReference type="ChEBI" id="CHEBI:456215"/>
        <dbReference type="EC" id="6.1.1.2"/>
    </reaction>
</comment>
<comment type="subcellular location">
    <subcellularLocation>
        <location evidence="1">Cytoplasm</location>
    </subcellularLocation>
</comment>
<comment type="similarity">
    <text evidence="1">Belongs to the class-I aminoacyl-tRNA synthetase family.</text>
</comment>
<comment type="sequence caution" evidence="2">
    <conflict type="erroneous initiation">
        <sequence resource="EMBL-CDS" id="AAG20338"/>
    </conflict>
</comment>
<name>SYW1_HALSA</name>
<keyword id="KW-0030">Aminoacyl-tRNA synthetase</keyword>
<keyword id="KW-0067">ATP-binding</keyword>
<keyword id="KW-0963">Cytoplasm</keyword>
<keyword id="KW-0436">Ligase</keyword>
<keyword id="KW-0547">Nucleotide-binding</keyword>
<keyword id="KW-0648">Protein biosynthesis</keyword>
<keyword id="KW-1185">Reference proteome</keyword>
<feature type="chain" id="PRO_0000136720" description="Tryptophan--tRNA ligase 1">
    <location>
        <begin position="1"/>
        <end position="513"/>
    </location>
</feature>
<feature type="short sequence motif" description="'HIGH' region">
    <location>
        <begin position="86"/>
        <end position="94"/>
    </location>
</feature>
<feature type="short sequence motif" description="'KMSKS' region">
    <location>
        <begin position="393"/>
        <end position="397"/>
    </location>
</feature>
<accession>Q9HN83</accession>
<gene>
    <name evidence="1" type="primary">trpS1</name>
    <name type="ordered locus">VNG_2208G</name>
</gene>
<evidence type="ECO:0000255" key="1">
    <source>
        <dbReference type="HAMAP-Rule" id="MF_00140"/>
    </source>
</evidence>
<evidence type="ECO:0000305" key="2"/>
<sequence>MTSDDTDDTAGADDVALDPWGSATISDYRALFDEFGIEAFEDVLDGVPTPHSLMRRAIIFGHRDYRRVAAAMRNDEPFAALSGFMPTGDPHIGHKMVFDELIWHQQQGGDAYALIADLEAHSARGLDWAEIDEHAEDYLLSLLALGFDADEGELYRQSTNRELQDLAFELGIEANTSEFEAIYGFGGDTDVSHMQSVVTQMADILYPQLDAPKPTVIPVGPDQDPHVRFARDLAERTRYFKVTEAFASVAFDDDERPLVRAAYDARSQYAADTDQPRCTEAADWLAAEPAAADGVDAATAESVVQKLENAGMEPLRPRVRFFDRQATDEAFTALIDEIAGEKRVFEGHVDAFELSAETARDLALAVEVDHGGYGFVPPSSVYHRFMTGLTGGKMSSSEPASHISLLDDPETGADKVAAATTGGRDTAAEQRERGGEPDDCPVYELYAYLLAGDDDALAEEVYAECANGDRLCGGCKEQAADLMAQFLETHQENREAARDVLAELDIDLDSARV</sequence>
<dbReference type="EC" id="6.1.1.2" evidence="1"/>
<dbReference type="EMBL" id="AE004437">
    <property type="protein sequence ID" value="AAG20338.1"/>
    <property type="status" value="ALT_INIT"/>
    <property type="molecule type" value="Genomic_DNA"/>
</dbReference>
<dbReference type="PIR" id="F84371">
    <property type="entry name" value="F84371"/>
</dbReference>
<dbReference type="RefSeq" id="WP_010903639.1">
    <property type="nucleotide sequence ID" value="NC_002607.1"/>
</dbReference>
<dbReference type="SMR" id="Q9HN83"/>
<dbReference type="FunCoup" id="Q9HN83">
    <property type="interactions" value="224"/>
</dbReference>
<dbReference type="STRING" id="64091.VNG_2208G"/>
<dbReference type="PaxDb" id="64091-VNG_2208G"/>
<dbReference type="KEGG" id="hal:VNG_2208G"/>
<dbReference type="PATRIC" id="fig|64091.14.peg.1698"/>
<dbReference type="HOGENOM" id="CLU_032621_3_1_2"/>
<dbReference type="InParanoid" id="Q9HN83"/>
<dbReference type="OrthoDB" id="371821at2157"/>
<dbReference type="PhylomeDB" id="Q9HN83"/>
<dbReference type="Proteomes" id="UP000000554">
    <property type="component" value="Chromosome"/>
</dbReference>
<dbReference type="GO" id="GO:0005737">
    <property type="term" value="C:cytoplasm"/>
    <property type="evidence" value="ECO:0000318"/>
    <property type="project" value="GO_Central"/>
</dbReference>
<dbReference type="GO" id="GO:0005524">
    <property type="term" value="F:ATP binding"/>
    <property type="evidence" value="ECO:0007669"/>
    <property type="project" value="UniProtKB-UniRule"/>
</dbReference>
<dbReference type="GO" id="GO:0004830">
    <property type="term" value="F:tryptophan-tRNA ligase activity"/>
    <property type="evidence" value="ECO:0000318"/>
    <property type="project" value="GO_Central"/>
</dbReference>
<dbReference type="GO" id="GO:0006436">
    <property type="term" value="P:tryptophanyl-tRNA aminoacylation"/>
    <property type="evidence" value="ECO:0000318"/>
    <property type="project" value="GO_Central"/>
</dbReference>
<dbReference type="FunFam" id="3.40.50.620:FF:000207">
    <property type="entry name" value="Tryptophan--tRNA ligase"/>
    <property type="match status" value="1"/>
</dbReference>
<dbReference type="Gene3D" id="3.40.50.620">
    <property type="entry name" value="HUPs"/>
    <property type="match status" value="1"/>
</dbReference>
<dbReference type="Gene3D" id="1.10.240.10">
    <property type="entry name" value="Tyrosyl-Transfer RNA Synthetase"/>
    <property type="match status" value="1"/>
</dbReference>
<dbReference type="HAMAP" id="MF_00140_A">
    <property type="entry name" value="Trp_tRNA_synth_A"/>
    <property type="match status" value="1"/>
</dbReference>
<dbReference type="InterPro" id="IPR002305">
    <property type="entry name" value="aa-tRNA-synth_Ic"/>
</dbReference>
<dbReference type="InterPro" id="IPR014729">
    <property type="entry name" value="Rossmann-like_a/b/a_fold"/>
</dbReference>
<dbReference type="InterPro" id="IPR002306">
    <property type="entry name" value="Trp-tRNA-ligase"/>
</dbReference>
<dbReference type="InterPro" id="IPR020653">
    <property type="entry name" value="Tryptophan-tRNA-ligase_arc"/>
</dbReference>
<dbReference type="NCBIfam" id="NF008926">
    <property type="entry name" value="PRK12285.1-3"/>
    <property type="match status" value="1"/>
</dbReference>
<dbReference type="NCBIfam" id="NF008928">
    <property type="entry name" value="PRK12285.1-5"/>
    <property type="match status" value="1"/>
</dbReference>
<dbReference type="PANTHER" id="PTHR10055:SF5">
    <property type="entry name" value="TRYPTOPHAN--TRNA LIGASE"/>
    <property type="match status" value="1"/>
</dbReference>
<dbReference type="PANTHER" id="PTHR10055">
    <property type="entry name" value="TRYPTOPHANYL-TRNA SYNTHETASE"/>
    <property type="match status" value="1"/>
</dbReference>
<dbReference type="Pfam" id="PF00579">
    <property type="entry name" value="tRNA-synt_1b"/>
    <property type="match status" value="2"/>
</dbReference>
<dbReference type="PRINTS" id="PR01039">
    <property type="entry name" value="TRNASYNTHTRP"/>
</dbReference>
<dbReference type="SUPFAM" id="SSF52374">
    <property type="entry name" value="Nucleotidylyl transferase"/>
    <property type="match status" value="1"/>
</dbReference>